<accession>A1C603</accession>
<keyword id="KW-0067">ATP-binding</keyword>
<keyword id="KW-0285">Flavoprotein</keyword>
<keyword id="KW-0288">FMN</keyword>
<keyword id="KW-0418">Kinase</keyword>
<keyword id="KW-0460">Magnesium</keyword>
<keyword id="KW-0479">Metal-binding</keyword>
<keyword id="KW-0547">Nucleotide-binding</keyword>
<keyword id="KW-1185">Reference proteome</keyword>
<keyword id="KW-0808">Transferase</keyword>
<keyword id="KW-0862">Zinc</keyword>
<sequence>MRPDGPRDPVVGPDSGPEPPYPVRLSGPVIKGFGRGSKELGIPTANIPAEELAEHPDLQVGVYYGVVALDPAKFQYHGDASRKGEDSQAAILPAVLSIGYNPFYKNKTRSIEIHIMPPLSSPSPTAEVTTQGQGHGQVKFHKLPDFYGTQLKLLILGYIRPEFDYVSLEALVEDIRVDCEVARASLQRPAYERYLAGGQGLDAVEKQRRWLVSF</sequence>
<name>RIFK_ASPCL</name>
<gene>
    <name type="primary">fmn1</name>
    <name type="ORF">ACLA_068520</name>
</gene>
<reference key="1">
    <citation type="journal article" date="2008" name="PLoS Genet.">
        <title>Genomic islands in the pathogenic filamentous fungus Aspergillus fumigatus.</title>
        <authorList>
            <person name="Fedorova N.D."/>
            <person name="Khaldi N."/>
            <person name="Joardar V.S."/>
            <person name="Maiti R."/>
            <person name="Amedeo P."/>
            <person name="Anderson M.J."/>
            <person name="Crabtree J."/>
            <person name="Silva J.C."/>
            <person name="Badger J.H."/>
            <person name="Albarraq A."/>
            <person name="Angiuoli S."/>
            <person name="Bussey H."/>
            <person name="Bowyer P."/>
            <person name="Cotty P.J."/>
            <person name="Dyer P.S."/>
            <person name="Egan A."/>
            <person name="Galens K."/>
            <person name="Fraser-Liggett C.M."/>
            <person name="Haas B.J."/>
            <person name="Inman J.M."/>
            <person name="Kent R."/>
            <person name="Lemieux S."/>
            <person name="Malavazi I."/>
            <person name="Orvis J."/>
            <person name="Roemer T."/>
            <person name="Ronning C.M."/>
            <person name="Sundaram J.P."/>
            <person name="Sutton G."/>
            <person name="Turner G."/>
            <person name="Venter J.C."/>
            <person name="White O.R."/>
            <person name="Whitty B.R."/>
            <person name="Youngman P."/>
            <person name="Wolfe K.H."/>
            <person name="Goldman G.H."/>
            <person name="Wortman J.R."/>
            <person name="Jiang B."/>
            <person name="Denning D.W."/>
            <person name="Nierman W.C."/>
        </authorList>
    </citation>
    <scope>NUCLEOTIDE SEQUENCE [LARGE SCALE GENOMIC DNA]</scope>
    <source>
        <strain>ATCC 1007 / CBS 513.65 / DSM 816 / NCTC 3887 / NRRL 1 / QM 1276 / 107</strain>
    </source>
</reference>
<dbReference type="EC" id="2.7.1.26"/>
<dbReference type="EMBL" id="DS027045">
    <property type="protein sequence ID" value="EAW13824.1"/>
    <property type="molecule type" value="Genomic_DNA"/>
</dbReference>
<dbReference type="RefSeq" id="XP_001275250.1">
    <property type="nucleotide sequence ID" value="XM_001275249.1"/>
</dbReference>
<dbReference type="SMR" id="A1C603"/>
<dbReference type="STRING" id="344612.A1C603"/>
<dbReference type="EnsemblFungi" id="EAW13824">
    <property type="protein sequence ID" value="EAW13824"/>
    <property type="gene ID" value="ACLA_068520"/>
</dbReference>
<dbReference type="GeneID" id="4707980"/>
<dbReference type="KEGG" id="act:ACLA_068520"/>
<dbReference type="VEuPathDB" id="FungiDB:ACLA_068520"/>
<dbReference type="eggNOG" id="KOG3110">
    <property type="taxonomic scope" value="Eukaryota"/>
</dbReference>
<dbReference type="HOGENOM" id="CLU_048437_3_2_1"/>
<dbReference type="OMA" id="FDCEVAR"/>
<dbReference type="OrthoDB" id="276388at2759"/>
<dbReference type="UniPathway" id="UPA00276">
    <property type="reaction ID" value="UER00406"/>
</dbReference>
<dbReference type="Proteomes" id="UP000006701">
    <property type="component" value="Unassembled WGS sequence"/>
</dbReference>
<dbReference type="GO" id="GO:0005739">
    <property type="term" value="C:mitochondrion"/>
    <property type="evidence" value="ECO:0007669"/>
    <property type="project" value="TreeGrafter"/>
</dbReference>
<dbReference type="GO" id="GO:0005524">
    <property type="term" value="F:ATP binding"/>
    <property type="evidence" value="ECO:0007669"/>
    <property type="project" value="UniProtKB-KW"/>
</dbReference>
<dbReference type="GO" id="GO:0046872">
    <property type="term" value="F:metal ion binding"/>
    <property type="evidence" value="ECO:0007669"/>
    <property type="project" value="UniProtKB-KW"/>
</dbReference>
<dbReference type="GO" id="GO:0008531">
    <property type="term" value="F:riboflavin kinase activity"/>
    <property type="evidence" value="ECO:0007669"/>
    <property type="project" value="UniProtKB-EC"/>
</dbReference>
<dbReference type="GO" id="GO:0009398">
    <property type="term" value="P:FMN biosynthetic process"/>
    <property type="evidence" value="ECO:0007669"/>
    <property type="project" value="UniProtKB-UniPathway"/>
</dbReference>
<dbReference type="GO" id="GO:0009231">
    <property type="term" value="P:riboflavin biosynthetic process"/>
    <property type="evidence" value="ECO:0007669"/>
    <property type="project" value="InterPro"/>
</dbReference>
<dbReference type="FunFam" id="2.40.30.30:FF:000008">
    <property type="entry name" value="Riboflavin kinase"/>
    <property type="match status" value="1"/>
</dbReference>
<dbReference type="Gene3D" id="2.40.30.30">
    <property type="entry name" value="Riboflavin kinase-like"/>
    <property type="match status" value="1"/>
</dbReference>
<dbReference type="InterPro" id="IPR023468">
    <property type="entry name" value="Riboflavin_kinase"/>
</dbReference>
<dbReference type="InterPro" id="IPR015865">
    <property type="entry name" value="Riboflavin_kinase_bac/euk"/>
</dbReference>
<dbReference type="InterPro" id="IPR023465">
    <property type="entry name" value="Riboflavin_kinase_dom_sf"/>
</dbReference>
<dbReference type="PANTHER" id="PTHR22749:SF6">
    <property type="entry name" value="RIBOFLAVIN KINASE"/>
    <property type="match status" value="1"/>
</dbReference>
<dbReference type="PANTHER" id="PTHR22749">
    <property type="entry name" value="RIBOFLAVIN KINASE/FMN ADENYLYLTRANSFERASE"/>
    <property type="match status" value="1"/>
</dbReference>
<dbReference type="Pfam" id="PF01687">
    <property type="entry name" value="Flavokinase"/>
    <property type="match status" value="1"/>
</dbReference>
<dbReference type="SMART" id="SM00904">
    <property type="entry name" value="Flavokinase"/>
    <property type="match status" value="1"/>
</dbReference>
<dbReference type="SUPFAM" id="SSF82114">
    <property type="entry name" value="Riboflavin kinase-like"/>
    <property type="match status" value="1"/>
</dbReference>
<feature type="chain" id="PRO_0000301833" description="Riboflavin kinase">
    <location>
        <begin position="1"/>
        <end position="214"/>
    </location>
</feature>
<feature type="region of interest" description="Disordered" evidence="3">
    <location>
        <begin position="1"/>
        <end position="26"/>
    </location>
</feature>
<feature type="active site" description="Nucleophile" evidence="1">
    <location>
        <position position="112"/>
    </location>
</feature>
<feature type="binding site" evidence="2">
    <location>
        <position position="44"/>
    </location>
    <ligand>
        <name>Mg(2+)</name>
        <dbReference type="ChEBI" id="CHEBI:18420"/>
    </ligand>
</feature>
<feature type="binding site" evidence="2">
    <location>
        <position position="46"/>
    </location>
    <ligand>
        <name>Mg(2+)</name>
        <dbReference type="ChEBI" id="CHEBI:18420"/>
    </ligand>
</feature>
<organism>
    <name type="scientific">Aspergillus clavatus (strain ATCC 1007 / CBS 513.65 / DSM 816 / NCTC 3887 / NRRL 1 / QM 1276 / 107)</name>
    <dbReference type="NCBI Taxonomy" id="344612"/>
    <lineage>
        <taxon>Eukaryota</taxon>
        <taxon>Fungi</taxon>
        <taxon>Dikarya</taxon>
        <taxon>Ascomycota</taxon>
        <taxon>Pezizomycotina</taxon>
        <taxon>Eurotiomycetes</taxon>
        <taxon>Eurotiomycetidae</taxon>
        <taxon>Eurotiales</taxon>
        <taxon>Aspergillaceae</taxon>
        <taxon>Aspergillus</taxon>
        <taxon>Aspergillus subgen. Fumigati</taxon>
    </lineage>
</organism>
<protein>
    <recommendedName>
        <fullName>Riboflavin kinase</fullName>
        <ecNumber>2.7.1.26</ecNumber>
    </recommendedName>
    <alternativeName>
        <fullName>Flavin mononucleotide kinase 1</fullName>
    </alternativeName>
</protein>
<comment type="function">
    <text evidence="1">Catalyzes the phosphorylation of riboflavin (vitamin B2) to form flavin mononucleotide (FMN) coenzyme.</text>
</comment>
<comment type="catalytic activity">
    <reaction>
        <text>riboflavin + ATP = FMN + ADP + H(+)</text>
        <dbReference type="Rhea" id="RHEA:14357"/>
        <dbReference type="ChEBI" id="CHEBI:15378"/>
        <dbReference type="ChEBI" id="CHEBI:30616"/>
        <dbReference type="ChEBI" id="CHEBI:57986"/>
        <dbReference type="ChEBI" id="CHEBI:58210"/>
        <dbReference type="ChEBI" id="CHEBI:456216"/>
        <dbReference type="EC" id="2.7.1.26"/>
    </reaction>
</comment>
<comment type="cofactor">
    <cofactor evidence="1">
        <name>Zn(2+)</name>
        <dbReference type="ChEBI" id="CHEBI:29105"/>
    </cofactor>
    <cofactor evidence="1">
        <name>Mg(2+)</name>
        <dbReference type="ChEBI" id="CHEBI:18420"/>
    </cofactor>
    <text evidence="1">Zinc or magnesium.</text>
</comment>
<comment type="pathway">
    <text>Cofactor biosynthesis; FMN biosynthesis; FMN from riboflavin (ATP route): step 1/1.</text>
</comment>
<comment type="similarity">
    <text evidence="4">Belongs to the flavokinase family.</text>
</comment>
<proteinExistence type="inferred from homology"/>
<evidence type="ECO:0000250" key="1"/>
<evidence type="ECO:0000250" key="2">
    <source>
        <dbReference type="UniProtKB" id="Q969G6"/>
    </source>
</evidence>
<evidence type="ECO:0000256" key="3">
    <source>
        <dbReference type="SAM" id="MobiDB-lite"/>
    </source>
</evidence>
<evidence type="ECO:0000305" key="4"/>